<accession>Q7Y618</accession>
<keyword id="KW-0150">Chloroplast</keyword>
<keyword id="KW-0934">Plastid</keyword>
<protein>
    <recommendedName>
        <fullName>Uncharacterized 8.8 kDa protein in rps12-tRNA-Val intergenic region</fullName>
    </recommendedName>
</protein>
<name>YCX1_CALFG</name>
<reference key="1">
    <citation type="journal article" date="2003" name="Plant Syst. Evol.">
        <title>The chloroplast genome of the 'basal' angiosperm Calycanthus fertilis -- structural and phylogenetic analyses.</title>
        <authorList>
            <person name="Goremykin V.V."/>
            <person name="Hirsch-Ernst K.I."/>
            <person name="Woelfl S."/>
            <person name="Hellwig F.H."/>
        </authorList>
    </citation>
    <scope>NUCLEOTIDE SEQUENCE [LARGE SCALE GENOMIC DNA]</scope>
</reference>
<feature type="chain" id="PRO_0000361022" description="Uncharacterized 8.8 kDa protein in rps12-tRNA-Val intergenic region">
    <location>
        <begin position="1"/>
        <end position="75"/>
    </location>
</feature>
<proteinExistence type="predicted"/>
<geneLocation type="chloroplast"/>
<organism>
    <name type="scientific">Calycanthus floridus var. glaucus</name>
    <name type="common">Eastern sweetshrub</name>
    <name type="synonym">Calycanthus fertilis var. ferax</name>
    <dbReference type="NCBI Taxonomy" id="212734"/>
    <lineage>
        <taxon>Eukaryota</taxon>
        <taxon>Viridiplantae</taxon>
        <taxon>Streptophyta</taxon>
        <taxon>Embryophyta</taxon>
        <taxon>Tracheophyta</taxon>
        <taxon>Spermatophyta</taxon>
        <taxon>Magnoliopsida</taxon>
        <taxon>Magnoliidae</taxon>
        <taxon>Laurales</taxon>
        <taxon>Calycanthaceae</taxon>
        <taxon>Calycanthus</taxon>
    </lineage>
</organism>
<sequence>MRQKIFFLKRFDSELLYVQGSILKSFQRFSLTLSVSTNNSKYLDFFRTGPSQIATIRSTSFYTISETQGLNRMDM</sequence>
<comment type="subcellular location">
    <subcellularLocation>
        <location>Plastid</location>
        <location>Chloroplast</location>
    </subcellularLocation>
</comment>
<dbReference type="EMBL" id="AJ428413">
    <property type="protein sequence ID" value="CAD28768.1"/>
    <property type="molecule type" value="Genomic_DNA"/>
</dbReference>
<dbReference type="EMBL" id="AJ428413">
    <property type="protein sequence ID" value="CAD28782.1"/>
    <property type="molecule type" value="Genomic_DNA"/>
</dbReference>
<dbReference type="RefSeq" id="NP_862801.1">
    <property type="nucleotide sequence ID" value="NC_004993.1"/>
</dbReference>
<dbReference type="RefSeq" id="NP_862814.1">
    <property type="nucleotide sequence ID" value="NC_004993.1"/>
</dbReference>
<dbReference type="GeneID" id="5457108"/>
<dbReference type="GeneID" id="5457110"/>
<dbReference type="GO" id="GO:0009507">
    <property type="term" value="C:chloroplast"/>
    <property type="evidence" value="ECO:0007669"/>
    <property type="project" value="UniProtKB-SubCell"/>
</dbReference>